<sequence>MKKIAVDAMGGDYAPQAIVEGVNQALSDFSDIEVQLYGDEAKIKQYLTATERVSIIHTDEKIDSDDEPTRAIRNKKNASMVLAAKAVKDGEADAVLSAGNTGALLAAGFFIVGRIKNIDRPGLMSTLPTVDGKGFDMLDLGANAENTAQHLHQYAVLGSFYAKNVRGIAQPRVGLLNNGTESSKGDPLRKETYELLAADESLNFIGNVEARDLMNGVADVVVADGFTGNAVLKSIEGTAMGIMGLLKTAITGGGLRAKLGALLLKDSLRGLKKQLNYSDVGGAVLFGVKAPVVKTHGSSDAKAVYSTIRQIRTMLETDVVAQTAREFSGE</sequence>
<reference key="1">
    <citation type="journal article" date="2001" name="Microb. Drug Resist.">
        <title>Annotated draft genomic sequence from a Streptococcus pneumoniae type 19F clinical isolate.</title>
        <authorList>
            <person name="Dopazo J."/>
            <person name="Mendoza A."/>
            <person name="Herrero J."/>
            <person name="Caldara F."/>
            <person name="Humbert Y."/>
            <person name="Friedli L."/>
            <person name="Guerrier M."/>
            <person name="Grand-Schenk E."/>
            <person name="Gandin C."/>
            <person name="de Francesco M."/>
            <person name="Polissi A."/>
            <person name="Buell G."/>
            <person name="Feger G."/>
            <person name="Garcia E."/>
            <person name="Peitsch M."/>
            <person name="Garcia-Bustos J.F."/>
        </authorList>
    </citation>
    <scope>NUCLEOTIDE SEQUENCE [LARGE SCALE GENOMIC DNA]</scope>
    <source>
        <strain>G54</strain>
    </source>
</reference>
<reference key="2">
    <citation type="submission" date="2008-03" db="EMBL/GenBank/DDBJ databases">
        <title>Pneumococcal beta glucoside metabolism investigated by whole genome comparison.</title>
        <authorList>
            <person name="Mulas L."/>
            <person name="Trappetti C."/>
            <person name="Hakenbeck R."/>
            <person name="Iannelli F."/>
            <person name="Pozzi G."/>
            <person name="Davidsen T.M."/>
            <person name="Tettelin H."/>
            <person name="Oggioni M."/>
        </authorList>
    </citation>
    <scope>NUCLEOTIDE SEQUENCE [LARGE SCALE GENOMIC DNA]</scope>
    <source>
        <strain>G54</strain>
    </source>
</reference>
<accession>B5E5I6</accession>
<proteinExistence type="inferred from homology"/>
<keyword id="KW-0963">Cytoplasm</keyword>
<keyword id="KW-0444">Lipid biosynthesis</keyword>
<keyword id="KW-0443">Lipid metabolism</keyword>
<keyword id="KW-0594">Phospholipid biosynthesis</keyword>
<keyword id="KW-1208">Phospholipid metabolism</keyword>
<keyword id="KW-0808">Transferase</keyword>
<feature type="chain" id="PRO_1000089941" description="Phosphate acyltransferase">
    <location>
        <begin position="1"/>
        <end position="330"/>
    </location>
</feature>
<organism>
    <name type="scientific">Streptococcus pneumoniae serotype 19F (strain G54)</name>
    <dbReference type="NCBI Taxonomy" id="512566"/>
    <lineage>
        <taxon>Bacteria</taxon>
        <taxon>Bacillati</taxon>
        <taxon>Bacillota</taxon>
        <taxon>Bacilli</taxon>
        <taxon>Lactobacillales</taxon>
        <taxon>Streptococcaceae</taxon>
        <taxon>Streptococcus</taxon>
    </lineage>
</organism>
<name>PLSX_STRP4</name>
<protein>
    <recommendedName>
        <fullName evidence="1">Phosphate acyltransferase</fullName>
        <ecNumber evidence="1">2.3.1.274</ecNumber>
    </recommendedName>
    <alternativeName>
        <fullName evidence="1">Acyl-ACP phosphotransacylase</fullName>
    </alternativeName>
    <alternativeName>
        <fullName evidence="1">Acyl-[acyl-carrier-protein]--phosphate acyltransferase</fullName>
    </alternativeName>
    <alternativeName>
        <fullName evidence="1">Phosphate-acyl-ACP acyltransferase</fullName>
    </alternativeName>
</protein>
<evidence type="ECO:0000255" key="1">
    <source>
        <dbReference type="HAMAP-Rule" id="MF_00019"/>
    </source>
</evidence>
<comment type="function">
    <text evidence="1">Catalyzes the reversible formation of acyl-phosphate (acyl-PO(4)) from acyl-[acyl-carrier-protein] (acyl-ACP). This enzyme utilizes acyl-ACP as fatty acyl donor, but not acyl-CoA.</text>
</comment>
<comment type="catalytic activity">
    <reaction evidence="1">
        <text>a fatty acyl-[ACP] + phosphate = an acyl phosphate + holo-[ACP]</text>
        <dbReference type="Rhea" id="RHEA:42292"/>
        <dbReference type="Rhea" id="RHEA-COMP:9685"/>
        <dbReference type="Rhea" id="RHEA-COMP:14125"/>
        <dbReference type="ChEBI" id="CHEBI:43474"/>
        <dbReference type="ChEBI" id="CHEBI:59918"/>
        <dbReference type="ChEBI" id="CHEBI:64479"/>
        <dbReference type="ChEBI" id="CHEBI:138651"/>
        <dbReference type="EC" id="2.3.1.274"/>
    </reaction>
</comment>
<comment type="pathway">
    <text evidence="1">Lipid metabolism; phospholipid metabolism.</text>
</comment>
<comment type="subunit">
    <text evidence="1">Homodimer. Probably interacts with PlsY.</text>
</comment>
<comment type="subcellular location">
    <subcellularLocation>
        <location evidence="1">Cytoplasm</location>
    </subcellularLocation>
    <text evidence="1">Associated with the membrane possibly through PlsY.</text>
</comment>
<comment type="similarity">
    <text evidence="1">Belongs to the PlsX family.</text>
</comment>
<gene>
    <name evidence="1" type="primary">plsX</name>
    <name type="ordered locus">SPG_0043</name>
</gene>
<dbReference type="EC" id="2.3.1.274" evidence="1"/>
<dbReference type="EMBL" id="CP001015">
    <property type="protein sequence ID" value="ACF56169.1"/>
    <property type="molecule type" value="Genomic_DNA"/>
</dbReference>
<dbReference type="SMR" id="B5E5I6"/>
<dbReference type="KEGG" id="spx:SPG_0043"/>
<dbReference type="HOGENOM" id="CLU_039379_1_1_9"/>
<dbReference type="UniPathway" id="UPA00085"/>
<dbReference type="GO" id="GO:0005737">
    <property type="term" value="C:cytoplasm"/>
    <property type="evidence" value="ECO:0007669"/>
    <property type="project" value="UniProtKB-SubCell"/>
</dbReference>
<dbReference type="GO" id="GO:0043811">
    <property type="term" value="F:phosphate:acyl-[acyl carrier protein] acyltransferase activity"/>
    <property type="evidence" value="ECO:0007669"/>
    <property type="project" value="UniProtKB-UniRule"/>
</dbReference>
<dbReference type="GO" id="GO:0006633">
    <property type="term" value="P:fatty acid biosynthetic process"/>
    <property type="evidence" value="ECO:0007669"/>
    <property type="project" value="UniProtKB-UniRule"/>
</dbReference>
<dbReference type="GO" id="GO:0008654">
    <property type="term" value="P:phospholipid biosynthetic process"/>
    <property type="evidence" value="ECO:0007669"/>
    <property type="project" value="UniProtKB-KW"/>
</dbReference>
<dbReference type="Gene3D" id="3.40.718.10">
    <property type="entry name" value="Isopropylmalate Dehydrogenase"/>
    <property type="match status" value="1"/>
</dbReference>
<dbReference type="HAMAP" id="MF_00019">
    <property type="entry name" value="PlsX"/>
    <property type="match status" value="1"/>
</dbReference>
<dbReference type="InterPro" id="IPR003664">
    <property type="entry name" value="FA_synthesis"/>
</dbReference>
<dbReference type="InterPro" id="IPR012281">
    <property type="entry name" value="Phospholipid_synth_PlsX-like"/>
</dbReference>
<dbReference type="NCBIfam" id="TIGR00182">
    <property type="entry name" value="plsX"/>
    <property type="match status" value="1"/>
</dbReference>
<dbReference type="PANTHER" id="PTHR30100">
    <property type="entry name" value="FATTY ACID/PHOSPHOLIPID SYNTHESIS PROTEIN PLSX"/>
    <property type="match status" value="1"/>
</dbReference>
<dbReference type="PANTHER" id="PTHR30100:SF1">
    <property type="entry name" value="PHOSPHATE ACYLTRANSFERASE"/>
    <property type="match status" value="1"/>
</dbReference>
<dbReference type="Pfam" id="PF02504">
    <property type="entry name" value="FA_synthesis"/>
    <property type="match status" value="1"/>
</dbReference>
<dbReference type="PIRSF" id="PIRSF002465">
    <property type="entry name" value="Phsphlp_syn_PlsX"/>
    <property type="match status" value="1"/>
</dbReference>
<dbReference type="SUPFAM" id="SSF53659">
    <property type="entry name" value="Isocitrate/Isopropylmalate dehydrogenase-like"/>
    <property type="match status" value="1"/>
</dbReference>